<name>NADE_MALP2</name>
<evidence type="ECO:0000255" key="1">
    <source>
        <dbReference type="HAMAP-Rule" id="MF_00193"/>
    </source>
</evidence>
<protein>
    <recommendedName>
        <fullName evidence="1">NH(3)-dependent NAD(+) synthetase</fullName>
        <ecNumber evidence="1">6.3.1.5</ecNumber>
    </recommendedName>
</protein>
<dbReference type="EC" id="6.3.1.5" evidence="1"/>
<dbReference type="EMBL" id="BA000026">
    <property type="protein sequence ID" value="BAC43985.1"/>
    <property type="molecule type" value="Genomic_DNA"/>
</dbReference>
<dbReference type="RefSeq" id="WP_011077021.1">
    <property type="nucleotide sequence ID" value="NC_004432.1"/>
</dbReference>
<dbReference type="SMR" id="Q8EWK9"/>
<dbReference type="FunCoup" id="Q8EWK9">
    <property type="interactions" value="42"/>
</dbReference>
<dbReference type="STRING" id="272633.gene:10731293"/>
<dbReference type="KEGG" id="mpe:MYPE1940"/>
<dbReference type="eggNOG" id="COG0171">
    <property type="taxonomic scope" value="Bacteria"/>
</dbReference>
<dbReference type="HOGENOM" id="CLU_059327_1_1_14"/>
<dbReference type="InParanoid" id="Q8EWK9"/>
<dbReference type="UniPathway" id="UPA00253">
    <property type="reaction ID" value="UER00333"/>
</dbReference>
<dbReference type="Proteomes" id="UP000002522">
    <property type="component" value="Chromosome"/>
</dbReference>
<dbReference type="GO" id="GO:0005737">
    <property type="term" value="C:cytoplasm"/>
    <property type="evidence" value="ECO:0007669"/>
    <property type="project" value="InterPro"/>
</dbReference>
<dbReference type="GO" id="GO:0005524">
    <property type="term" value="F:ATP binding"/>
    <property type="evidence" value="ECO:0007669"/>
    <property type="project" value="UniProtKB-UniRule"/>
</dbReference>
<dbReference type="GO" id="GO:0004359">
    <property type="term" value="F:glutaminase activity"/>
    <property type="evidence" value="ECO:0007669"/>
    <property type="project" value="InterPro"/>
</dbReference>
<dbReference type="GO" id="GO:0046872">
    <property type="term" value="F:metal ion binding"/>
    <property type="evidence" value="ECO:0007669"/>
    <property type="project" value="UniProtKB-KW"/>
</dbReference>
<dbReference type="GO" id="GO:0003952">
    <property type="term" value="F:NAD+ synthase (glutamine-hydrolyzing) activity"/>
    <property type="evidence" value="ECO:0007669"/>
    <property type="project" value="InterPro"/>
</dbReference>
<dbReference type="GO" id="GO:0008795">
    <property type="term" value="F:NAD+ synthase activity"/>
    <property type="evidence" value="ECO:0007669"/>
    <property type="project" value="UniProtKB-UniRule"/>
</dbReference>
<dbReference type="GO" id="GO:0009435">
    <property type="term" value="P:NAD biosynthetic process"/>
    <property type="evidence" value="ECO:0007669"/>
    <property type="project" value="UniProtKB-UniRule"/>
</dbReference>
<dbReference type="CDD" id="cd00553">
    <property type="entry name" value="NAD_synthase"/>
    <property type="match status" value="1"/>
</dbReference>
<dbReference type="Gene3D" id="3.40.50.620">
    <property type="entry name" value="HUPs"/>
    <property type="match status" value="1"/>
</dbReference>
<dbReference type="HAMAP" id="MF_00193">
    <property type="entry name" value="NadE_ammonia_dep"/>
    <property type="match status" value="1"/>
</dbReference>
<dbReference type="InterPro" id="IPR022310">
    <property type="entry name" value="NAD/GMP_synthase"/>
</dbReference>
<dbReference type="InterPro" id="IPR003694">
    <property type="entry name" value="NAD_synthase"/>
</dbReference>
<dbReference type="InterPro" id="IPR022926">
    <property type="entry name" value="NH(3)-dep_NAD(+)_synth"/>
</dbReference>
<dbReference type="InterPro" id="IPR014729">
    <property type="entry name" value="Rossmann-like_a/b/a_fold"/>
</dbReference>
<dbReference type="NCBIfam" id="TIGR00552">
    <property type="entry name" value="nadE"/>
    <property type="match status" value="1"/>
</dbReference>
<dbReference type="PANTHER" id="PTHR23090:SF9">
    <property type="entry name" value="GLUTAMINE-DEPENDENT NAD(+) SYNTHETASE"/>
    <property type="match status" value="1"/>
</dbReference>
<dbReference type="PANTHER" id="PTHR23090">
    <property type="entry name" value="NH 3 /GLUTAMINE-DEPENDENT NAD + SYNTHETASE"/>
    <property type="match status" value="1"/>
</dbReference>
<dbReference type="Pfam" id="PF02540">
    <property type="entry name" value="NAD_synthase"/>
    <property type="match status" value="1"/>
</dbReference>
<dbReference type="SUPFAM" id="SSF52402">
    <property type="entry name" value="Adenine nucleotide alpha hydrolases-like"/>
    <property type="match status" value="1"/>
</dbReference>
<proteinExistence type="inferred from homology"/>
<gene>
    <name evidence="1" type="primary">nadE</name>
    <name type="ordered locus">MYPE1940</name>
</gene>
<keyword id="KW-0067">ATP-binding</keyword>
<keyword id="KW-0436">Ligase</keyword>
<keyword id="KW-0460">Magnesium</keyword>
<keyword id="KW-0479">Metal-binding</keyword>
<keyword id="KW-0520">NAD</keyword>
<keyword id="KW-0547">Nucleotide-binding</keyword>
<keyword id="KW-1185">Reference proteome</keyword>
<sequence length="243" mass="27550">MKKDYIKIIDKIANWMNQTLTEAKSNGFVYGVSGGIDSALICAIASKFFKDRSLAVRLDIFNSVNDTKDANLVISHFKVNSVDKNLEQVFNTFIKDLPDNKLALMNLKSRLRMVCLYYYAQTYNYLVCGTSNADELYTGYFTKFGDSGSDFIPLANLTKTDVRECSKILGVPSQIINKDPSAGLFENQKDEDDLKVSYLEIDNFLENNPISESSKNRILDLHKISEHKRNMPKTILKLGEIIK</sequence>
<feature type="chain" id="PRO_0000152181" description="NH(3)-dependent NAD(+) synthetase">
    <location>
        <begin position="1"/>
        <end position="243"/>
    </location>
</feature>
<feature type="binding site" evidence="1">
    <location>
        <begin position="31"/>
        <end position="38"/>
    </location>
    <ligand>
        <name>ATP</name>
        <dbReference type="ChEBI" id="CHEBI:30616"/>
    </ligand>
</feature>
<feature type="binding site" evidence="1">
    <location>
        <position position="37"/>
    </location>
    <ligand>
        <name>Mg(2+)</name>
        <dbReference type="ChEBI" id="CHEBI:18420"/>
    </ligand>
</feature>
<feature type="binding site" evidence="1">
    <location>
        <position position="110"/>
    </location>
    <ligand>
        <name>deamido-NAD(+)</name>
        <dbReference type="ChEBI" id="CHEBI:58437"/>
    </ligand>
</feature>
<feature type="binding site" evidence="1">
    <location>
        <position position="130"/>
    </location>
    <ligand>
        <name>ATP</name>
        <dbReference type="ChEBI" id="CHEBI:30616"/>
    </ligand>
</feature>
<feature type="binding site" evidence="1">
    <location>
        <position position="135"/>
    </location>
    <ligand>
        <name>Mg(2+)</name>
        <dbReference type="ChEBI" id="CHEBI:18420"/>
    </ligand>
</feature>
<feature type="binding site" evidence="1">
    <location>
        <position position="143"/>
    </location>
    <ligand>
        <name>deamido-NAD(+)</name>
        <dbReference type="ChEBI" id="CHEBI:58437"/>
    </ligand>
</feature>
<feature type="binding site" evidence="1">
    <location>
        <position position="150"/>
    </location>
    <ligand>
        <name>deamido-NAD(+)</name>
        <dbReference type="ChEBI" id="CHEBI:58437"/>
    </ligand>
</feature>
<feature type="binding site" evidence="1">
    <location>
        <position position="159"/>
    </location>
    <ligand>
        <name>ATP</name>
        <dbReference type="ChEBI" id="CHEBI:30616"/>
    </ligand>
</feature>
<feature type="binding site" evidence="1">
    <location>
        <position position="181"/>
    </location>
    <ligand>
        <name>ATP</name>
        <dbReference type="ChEBI" id="CHEBI:30616"/>
    </ligand>
</feature>
<feature type="binding site" evidence="1">
    <location>
        <begin position="227"/>
        <end position="228"/>
    </location>
    <ligand>
        <name>deamido-NAD(+)</name>
        <dbReference type="ChEBI" id="CHEBI:58437"/>
    </ligand>
</feature>
<accession>Q8EWK9</accession>
<comment type="function">
    <text evidence="1">Catalyzes the ATP-dependent amidation of deamido-NAD to form NAD. Uses ammonia as a nitrogen source.</text>
</comment>
<comment type="catalytic activity">
    <reaction evidence="1">
        <text>deamido-NAD(+) + NH4(+) + ATP = AMP + diphosphate + NAD(+) + H(+)</text>
        <dbReference type="Rhea" id="RHEA:21188"/>
        <dbReference type="ChEBI" id="CHEBI:15378"/>
        <dbReference type="ChEBI" id="CHEBI:28938"/>
        <dbReference type="ChEBI" id="CHEBI:30616"/>
        <dbReference type="ChEBI" id="CHEBI:33019"/>
        <dbReference type="ChEBI" id="CHEBI:57540"/>
        <dbReference type="ChEBI" id="CHEBI:58437"/>
        <dbReference type="ChEBI" id="CHEBI:456215"/>
        <dbReference type="EC" id="6.3.1.5"/>
    </reaction>
</comment>
<comment type="pathway">
    <text evidence="1">Cofactor biosynthesis; NAD(+) biosynthesis; NAD(+) from deamido-NAD(+) (ammonia route): step 1/1.</text>
</comment>
<comment type="subunit">
    <text evidence="1">Homodimer.</text>
</comment>
<comment type="similarity">
    <text evidence="1">Belongs to the NAD synthetase family.</text>
</comment>
<reference key="1">
    <citation type="journal article" date="2002" name="Nucleic Acids Res.">
        <title>The complete genomic sequence of Mycoplasma penetrans, an intracellular bacterial pathogen in humans.</title>
        <authorList>
            <person name="Sasaki Y."/>
            <person name="Ishikawa J."/>
            <person name="Yamashita A."/>
            <person name="Oshima K."/>
            <person name="Kenri T."/>
            <person name="Furuya K."/>
            <person name="Yoshino C."/>
            <person name="Horino A."/>
            <person name="Shiba T."/>
            <person name="Sasaki T."/>
            <person name="Hattori M."/>
        </authorList>
    </citation>
    <scope>NUCLEOTIDE SEQUENCE [LARGE SCALE GENOMIC DNA]</scope>
    <source>
        <strain>HF-2</strain>
    </source>
</reference>
<organism>
    <name type="scientific">Malacoplasma penetrans (strain HF-2)</name>
    <name type="common">Mycoplasma penetrans</name>
    <dbReference type="NCBI Taxonomy" id="272633"/>
    <lineage>
        <taxon>Bacteria</taxon>
        <taxon>Bacillati</taxon>
        <taxon>Mycoplasmatota</taxon>
        <taxon>Mycoplasmoidales</taxon>
        <taxon>Mycoplasmoidaceae</taxon>
        <taxon>Malacoplasma</taxon>
    </lineage>
</organism>